<dbReference type="EMBL" id="M65175">
    <property type="protein sequence ID" value="AAA43713.1"/>
    <property type="molecule type" value="Genomic_RNA"/>
</dbReference>
<dbReference type="PIR" id="JQ1914">
    <property type="entry name" value="JQ1914"/>
</dbReference>
<dbReference type="SMR" id="Q67379"/>
<dbReference type="GlyCosmos" id="Q67379">
    <property type="glycosylation" value="8 sites, No reported glycans"/>
</dbReference>
<dbReference type="GO" id="GO:0020002">
    <property type="term" value="C:host cell plasma membrane"/>
    <property type="evidence" value="ECO:0007669"/>
    <property type="project" value="UniProtKB-SubCell"/>
</dbReference>
<dbReference type="GO" id="GO:0016020">
    <property type="term" value="C:membrane"/>
    <property type="evidence" value="ECO:0007669"/>
    <property type="project" value="UniProtKB-KW"/>
</dbReference>
<dbReference type="GO" id="GO:0019031">
    <property type="term" value="C:viral envelope"/>
    <property type="evidence" value="ECO:0007669"/>
    <property type="project" value="UniProtKB-KW"/>
</dbReference>
<dbReference type="GO" id="GO:0055036">
    <property type="term" value="C:virion membrane"/>
    <property type="evidence" value="ECO:0007669"/>
    <property type="project" value="UniProtKB-SubCell"/>
</dbReference>
<dbReference type="GO" id="GO:0046789">
    <property type="term" value="F:host cell surface receptor binding"/>
    <property type="evidence" value="ECO:0007669"/>
    <property type="project" value="InterPro"/>
</dbReference>
<dbReference type="GO" id="GO:0039654">
    <property type="term" value="P:fusion of virus membrane with host endosome membrane"/>
    <property type="evidence" value="ECO:0007669"/>
    <property type="project" value="UniProtKB-KW"/>
</dbReference>
<dbReference type="GO" id="GO:0019064">
    <property type="term" value="P:fusion of virus membrane with host plasma membrane"/>
    <property type="evidence" value="ECO:0007669"/>
    <property type="project" value="InterPro"/>
</dbReference>
<dbReference type="GO" id="GO:0046718">
    <property type="term" value="P:symbiont entry into host cell"/>
    <property type="evidence" value="ECO:0007669"/>
    <property type="project" value="UniProtKB-KW"/>
</dbReference>
<dbReference type="GO" id="GO:0019062">
    <property type="term" value="P:virion attachment to host cell"/>
    <property type="evidence" value="ECO:0007669"/>
    <property type="project" value="UniProtKB-KW"/>
</dbReference>
<dbReference type="Gene3D" id="3.90.209.20">
    <property type="match status" value="1"/>
</dbReference>
<dbReference type="Gene3D" id="2.10.77.10">
    <property type="entry name" value="Hemagglutinin Chain A, Domain 2"/>
    <property type="match status" value="1"/>
</dbReference>
<dbReference type="InterPro" id="IPR008980">
    <property type="entry name" value="Capsid_hemagglutn"/>
</dbReference>
<dbReference type="InterPro" id="IPR013828">
    <property type="entry name" value="Hemagglutn_HA1_a/b_dom_sf"/>
</dbReference>
<dbReference type="InterPro" id="IPR001364">
    <property type="entry name" value="Hemagglutn_influenz_A/B"/>
</dbReference>
<dbReference type="Pfam" id="PF00509">
    <property type="entry name" value="Hemagglutinin"/>
    <property type="match status" value="1"/>
</dbReference>
<dbReference type="SUPFAM" id="SSF49818">
    <property type="entry name" value="Viral protein domain"/>
    <property type="match status" value="1"/>
</dbReference>
<evidence type="ECO:0000250" key="1"/>
<evidence type="ECO:0000255" key="2"/>
<evidence type="ECO:0000305" key="3"/>
<accession>Q67379</accession>
<feature type="signal peptide" evidence="2">
    <location>
        <begin position="1"/>
        <end position="15"/>
    </location>
</feature>
<feature type="chain" id="PRO_0000039132" description="Hemagglutinin HA1 chain" evidence="1">
    <location>
        <begin position="16"/>
        <end position="360"/>
    </location>
</feature>
<feature type="glycosylation site" description="N-linked (GlcNAc...) asparagine; by host" evidence="2">
    <location>
        <position position="40"/>
    </location>
</feature>
<feature type="glycosylation site" description="N-linked (GlcNAc...) asparagine; by host" evidence="2">
    <location>
        <position position="74"/>
    </location>
</feature>
<feature type="glycosylation site" description="N-linked (GlcNAc...) asparagine; by host" evidence="2">
    <location>
        <position position="160"/>
    </location>
</feature>
<feature type="glycosylation site" description="N-linked (GlcNAc...) asparagine; by host" evidence="2">
    <location>
        <position position="179"/>
    </location>
</feature>
<feature type="glycosylation site" description="N-linked (GlcNAc...) asparagine; by host" evidence="2">
    <location>
        <position position="210"/>
    </location>
</feature>
<feature type="glycosylation site" description="N-linked (GlcNAc...) asparagine; by host" evidence="2">
    <location>
        <position position="246"/>
    </location>
</feature>
<feature type="glycosylation site" description="N-linked (GlcNAc...) asparagine; by host" evidence="2">
    <location>
        <position position="317"/>
    </location>
</feature>
<feature type="glycosylation site" description="N-linked (GlcNAc...) asparagine; by host" evidence="2">
    <location>
        <position position="346"/>
    </location>
</feature>
<feature type="non-terminal residue">
    <location>
        <position position="360"/>
    </location>
</feature>
<gene>
    <name type="primary">HA</name>
</gene>
<name>HEMA_INBTF</name>
<organismHost>
    <name type="scientific">Homo sapiens</name>
    <name type="common">Human</name>
    <dbReference type="NCBI Taxonomy" id="9606"/>
</organismHost>
<sequence length="360" mass="39074">MKAIIVLLMVVTSNADRICTGITSSNSPHVVKTATQGEVNVTGVIPLTTTPTKSHFANLKGTKTRGKLCPNCLNCTDLDVALARPMCIGTIPSAKASILHEVRPVTSRCFPIMHDRTKIRQLPNLLRGYENIRLSTHNVINAERAPGGPYRLGTSGSCPNVTSRSGFFATMAWAVPRDNKTATNPLTVEVPYICTKGEDQITVWGFHSDNKTQMKNLYGDSNPQKFTSSANGVTTHYVSQIGGFPNQTEDGGLPQSGRIVVDYMVQKPGKTGTIVYQRGVLLPQKVWCASGRSKVIKGSLPLIGEADCLHAKYGGLNKSKPYYTGEHAKAIGNCPIWVKTPLKLANGTKYRPPAKLLKER</sequence>
<reference key="1">
    <citation type="journal article" date="1992" name="J. Gen. Virol.">
        <title>Antigenic and genetic characterization of the haemagglutinins of recent cocirculating strains of influenza B virus.</title>
        <authorList>
            <person name="Rota P.A."/>
            <person name="Hemphill M."/>
            <person name="Whistler T."/>
            <person name="Regnery H.L."/>
            <person name="Kendal A.P."/>
        </authorList>
    </citation>
    <scope>NUCLEOTIDE SEQUENCE [GENOMIC RNA]</scope>
</reference>
<keyword id="KW-1015">Disulfide bond</keyword>
<keyword id="KW-1170">Fusion of virus membrane with host endosomal membrane</keyword>
<keyword id="KW-1168">Fusion of virus membrane with host membrane</keyword>
<keyword id="KW-0325">Glycoprotein</keyword>
<keyword id="KW-0348">Hemagglutinin</keyword>
<keyword id="KW-1032">Host cell membrane</keyword>
<keyword id="KW-1043">Host membrane</keyword>
<keyword id="KW-0945">Host-virus interaction</keyword>
<keyword id="KW-0449">Lipoprotein</keyword>
<keyword id="KW-0472">Membrane</keyword>
<keyword id="KW-0564">Palmitate</keyword>
<keyword id="KW-0732">Signal</keyword>
<keyword id="KW-0812">Transmembrane</keyword>
<keyword id="KW-1161">Viral attachment to host cell</keyword>
<keyword id="KW-0261">Viral envelope protein</keyword>
<keyword id="KW-1162">Viral penetration into host cytoplasm</keyword>
<keyword id="KW-0946">Virion</keyword>
<keyword id="KW-1160">Virus entry into host cell</keyword>
<organism>
    <name type="scientific">Influenza B virus (strain B/Texas/4/1990)</name>
    <dbReference type="NCBI Taxonomy" id="291800"/>
    <lineage>
        <taxon>Viruses</taxon>
        <taxon>Riboviria</taxon>
        <taxon>Orthornavirae</taxon>
        <taxon>Negarnaviricota</taxon>
        <taxon>Polyploviricotina</taxon>
        <taxon>Insthoviricetes</taxon>
        <taxon>Articulavirales</taxon>
        <taxon>Orthomyxoviridae</taxon>
        <taxon>Betainfluenzavirus</taxon>
        <taxon>Betainfluenzavirus influenzae</taxon>
        <taxon>Influenza B virus</taxon>
    </lineage>
</organism>
<comment type="function">
    <text>Binds to sialic acid-containing receptors on the cell surface, bringing about the attachment of the virus particle to the cell. Plays a major role in the determination of host range restriction and virulence. Class I viral fusion protein. Responsible for penetration of the virus into the cell cytoplasm by mediating the fusion of the membrane of the endocytosed virus particle with the endosomal membrane. Low pH in endosomes induce an irreversible conformational change in HA2, releasing the fusion hydrophobic peptide. Several trimers are required to form a competent fusion pore.</text>
</comment>
<comment type="subunit">
    <text>Homotrimer of disulfide-linked HA1-HA2.</text>
</comment>
<comment type="subcellular location">
    <subcellularLocation>
        <location evidence="3">Virion membrane</location>
        <topology evidence="3">Single-pass type I membrane protein</topology>
    </subcellularLocation>
    <subcellularLocation>
        <location>Host apical cell membrane</location>
        <topology>Single-pass type I membrane protein</topology>
    </subcellularLocation>
    <text>Targeted to the apical plasma membrane in epithelial polarized cells through a signal present in the transmembrane domain. Associated with glycosphingolipid- and cholesterol-enriched detergent-resistant lipid rafts.</text>
</comment>
<comment type="PTM">
    <text evidence="1">In natural infection, inactive HA is matured into HA1 and HA2 outside the cell by one or more trypsin-like, arginine-specific endoprotease secreted by the bronchial epithelial cells. One identified protease that may be involved in this process is secreted in lungs by club cells (By similarity).</text>
</comment>
<comment type="PTM">
    <text evidence="1">Palmitoylated.</text>
</comment>
<comment type="miscellaneous">
    <text>Major glycoprotein, comprises over 80% of the envelope proteins present in virus particle.</text>
</comment>
<comment type="miscellaneous">
    <text>The extent of infection into host organism is determined by HA. Influenza viruses bud from the apical surface of polarized epithelial cells (e.g. bronchial epithelial cells) into lumen of lungs and are therefore usually pneumotropic. The reason is that HA is cleaved by tryptase clara which is restricted to lungs. However, HAs of H5 and H7 pantropic avian viruses subtypes can be cleaved by furin and subtilisin-type enzymes, allowing the virus to grow in other organs than lungs.</text>
</comment>
<comment type="miscellaneous">
    <text>The influenza B genome consist of 8 RNA segments. Genetic variation of hemagglutinin and/or neuraminidase genes results in the emergence of new influenza strains. The mechanism of variation can be the result of point mutations or the result of genetic reassortment between segments of two different strains.</text>
</comment>
<comment type="similarity">
    <text evidence="3">Belongs to the influenza viruses hemagglutinin family.</text>
</comment>
<proteinExistence type="inferred from homology"/>
<protein>
    <recommendedName>
        <fullName>Hemagglutinin</fullName>
    </recommendedName>
    <component>
        <recommendedName>
            <fullName>Hemagglutinin HA1 chain</fullName>
        </recommendedName>
    </component>
</protein>